<reference evidence="5" key="1">
    <citation type="journal article" date="2012" name="Syst. Biol.">
        <title>Peptidomics-based phylogeny and biogeography of Mantophasmatodea (Hexapoda).</title>
        <authorList>
            <person name="Predel R."/>
            <person name="Neupert S."/>
            <person name="Huetteroth W."/>
            <person name="Kahnt J."/>
            <person name="Waidelich D."/>
            <person name="Roth S."/>
        </authorList>
    </citation>
    <scope>PROTEIN SEQUENCE</scope>
    <scope>AMIDATION AT VAL-12</scope>
    <source>
        <tissue evidence="3">Abdominal perisympathetic organs</tissue>
    </source>
</reference>
<evidence type="ECO:0000250" key="1">
    <source>
        <dbReference type="UniProtKB" id="P83923"/>
    </source>
</evidence>
<evidence type="ECO:0000255" key="2"/>
<evidence type="ECO:0000269" key="3">
    <source>
    </source>
</evidence>
<evidence type="ECO:0000303" key="4">
    <source>
    </source>
</evidence>
<evidence type="ECO:0000305" key="5"/>
<evidence type="ECO:0000305" key="6">
    <source>
    </source>
</evidence>
<dbReference type="GO" id="GO:0005576">
    <property type="term" value="C:extracellular region"/>
    <property type="evidence" value="ECO:0007669"/>
    <property type="project" value="UniProtKB-SubCell"/>
</dbReference>
<dbReference type="GO" id="GO:0007218">
    <property type="term" value="P:neuropeptide signaling pathway"/>
    <property type="evidence" value="ECO:0007669"/>
    <property type="project" value="UniProtKB-KW"/>
</dbReference>
<dbReference type="InterPro" id="IPR013231">
    <property type="entry name" value="Periviscerokinin"/>
</dbReference>
<dbReference type="Pfam" id="PF08259">
    <property type="entry name" value="Periviscerokin"/>
    <property type="match status" value="1"/>
</dbReference>
<keyword id="KW-0027">Amidation</keyword>
<keyword id="KW-0903">Direct protein sequencing</keyword>
<keyword id="KW-0527">Neuropeptide</keyword>
<keyword id="KW-0964">Secreted</keyword>
<protein>
    <recommendedName>
        <fullName evidence="4">CAPA-Periviscerokinin-1</fullName>
        <shortName evidence="4">CAPA-PVK-1</shortName>
    </recommendedName>
</protein>
<accession>B0M3C3</accession>
<name>PVK1_MANKU</name>
<organism>
    <name type="scientific">Mantophasma kudubergense</name>
    <name type="common">Gladiator</name>
    <name type="synonym">Heel-walker</name>
    <dbReference type="NCBI Taxonomy" id="1037657"/>
    <lineage>
        <taxon>Eukaryota</taxon>
        <taxon>Metazoa</taxon>
        <taxon>Ecdysozoa</taxon>
        <taxon>Arthropoda</taxon>
        <taxon>Hexapoda</taxon>
        <taxon>Insecta</taxon>
        <taxon>Pterygota</taxon>
        <taxon>Neoptera</taxon>
        <taxon>Polyneoptera</taxon>
        <taxon>Mantophasmatodea</taxon>
        <taxon>Mantophasmatidae</taxon>
        <taxon>Mantophasma</taxon>
    </lineage>
</organism>
<proteinExistence type="evidence at protein level"/>
<sequence>AEAAGLLPFPRV</sequence>
<comment type="function">
    <text evidence="1">Mediates visceral muscle contractile activity (myotropic activity).</text>
</comment>
<comment type="subcellular location">
    <subcellularLocation>
        <location evidence="6">Secreted</location>
    </subcellularLocation>
</comment>
<comment type="similarity">
    <text evidence="2">Belongs to the periviscerokinin family.</text>
</comment>
<feature type="peptide" id="PRO_0000420787" description="CAPA-Periviscerokinin-1" evidence="3">
    <location>
        <begin position="1"/>
        <end position="12"/>
    </location>
</feature>
<feature type="modified residue" description="Valine amide" evidence="3">
    <location>
        <position position="12"/>
    </location>
</feature>